<dbReference type="EMBL" id="CP000325">
    <property type="protein sequence ID" value="ABL02827.1"/>
    <property type="molecule type" value="Genomic_DNA"/>
</dbReference>
<dbReference type="SMR" id="A0PKF8"/>
<dbReference type="KEGG" id="mul:MUL_0052"/>
<dbReference type="eggNOG" id="COG1678">
    <property type="taxonomic scope" value="Bacteria"/>
</dbReference>
<dbReference type="HOGENOM" id="CLU_057596_2_0_11"/>
<dbReference type="Proteomes" id="UP000000765">
    <property type="component" value="Chromosome"/>
</dbReference>
<dbReference type="GO" id="GO:0005829">
    <property type="term" value="C:cytosol"/>
    <property type="evidence" value="ECO:0007669"/>
    <property type="project" value="TreeGrafter"/>
</dbReference>
<dbReference type="FunFam" id="3.40.1740.10:FF:000002">
    <property type="entry name" value="UPF0301 protein A5636_14805"/>
    <property type="match status" value="1"/>
</dbReference>
<dbReference type="Gene3D" id="3.40.1740.10">
    <property type="entry name" value="VC0467-like"/>
    <property type="match status" value="1"/>
</dbReference>
<dbReference type="HAMAP" id="MF_00758">
    <property type="entry name" value="UPF0301"/>
    <property type="match status" value="1"/>
</dbReference>
<dbReference type="InterPro" id="IPR003774">
    <property type="entry name" value="AlgH-like"/>
</dbReference>
<dbReference type="NCBIfam" id="NF001269">
    <property type="entry name" value="PRK00228.2-1"/>
    <property type="match status" value="1"/>
</dbReference>
<dbReference type="NCBIfam" id="NF001272">
    <property type="entry name" value="PRK00228.2-4"/>
    <property type="match status" value="1"/>
</dbReference>
<dbReference type="PANTHER" id="PTHR30327">
    <property type="entry name" value="UNCHARACTERIZED PROTEIN YQGE"/>
    <property type="match status" value="1"/>
</dbReference>
<dbReference type="PANTHER" id="PTHR30327:SF1">
    <property type="entry name" value="UPF0301 PROTEIN YQGE"/>
    <property type="match status" value="1"/>
</dbReference>
<dbReference type="Pfam" id="PF02622">
    <property type="entry name" value="DUF179"/>
    <property type="match status" value="1"/>
</dbReference>
<dbReference type="SUPFAM" id="SSF143456">
    <property type="entry name" value="VC0467-like"/>
    <property type="match status" value="1"/>
</dbReference>
<gene>
    <name type="ordered locus">MUL_0052</name>
</gene>
<proteinExistence type="inferred from homology"/>
<evidence type="ECO:0000255" key="1">
    <source>
        <dbReference type="HAMAP-Rule" id="MF_00758"/>
    </source>
</evidence>
<reference key="1">
    <citation type="journal article" date="2007" name="Genome Res.">
        <title>Reductive evolution and niche adaptation inferred from the genome of Mycobacterium ulcerans, the causative agent of Buruli ulcer.</title>
        <authorList>
            <person name="Stinear T.P."/>
            <person name="Seemann T."/>
            <person name="Pidot S."/>
            <person name="Frigui W."/>
            <person name="Reysset G."/>
            <person name="Garnier T."/>
            <person name="Meurice G."/>
            <person name="Simon D."/>
            <person name="Bouchier C."/>
            <person name="Ma L."/>
            <person name="Tichit M."/>
            <person name="Porter J.L."/>
            <person name="Ryan J."/>
            <person name="Johnson P.D.R."/>
            <person name="Davies J.K."/>
            <person name="Jenkin G.A."/>
            <person name="Small P.L.C."/>
            <person name="Jones L.M."/>
            <person name="Tekaia F."/>
            <person name="Laval F."/>
            <person name="Daffe M."/>
            <person name="Parkhill J."/>
            <person name="Cole S.T."/>
        </authorList>
    </citation>
    <scope>NUCLEOTIDE SEQUENCE [LARGE SCALE GENOMIC DNA]</scope>
    <source>
        <strain>Agy99</strain>
    </source>
</reference>
<feature type="chain" id="PRO_1000046665" description="UPF0301 protein MUL_0052">
    <location>
        <begin position="1"/>
        <end position="201"/>
    </location>
</feature>
<sequence>MAPQEDPEDHVAPAAQRVRAGTLLLANTDLLEPTFRRSVIYIVEHNDGGTLGVVLNRPSETAVHNVLPQWAKLAAKPKTMFIGGPVKRDAALCLATLRVGADPGGVSGLRHVAGRIVMVDLDADPDLIAPLVEGVRIFAGYSGWTIGQLEGEIERDDWIVLSALPSDVLVPPRADLWGRTLRRQPWPLSLLATHPIDVSRN</sequence>
<comment type="similarity">
    <text evidence="1">Belongs to the UPF0301 (AlgH) family.</text>
</comment>
<accession>A0PKF8</accession>
<protein>
    <recommendedName>
        <fullName evidence="1">UPF0301 protein MUL_0052</fullName>
    </recommendedName>
</protein>
<name>Y052_MYCUA</name>
<organism>
    <name type="scientific">Mycobacterium ulcerans (strain Agy99)</name>
    <dbReference type="NCBI Taxonomy" id="362242"/>
    <lineage>
        <taxon>Bacteria</taxon>
        <taxon>Bacillati</taxon>
        <taxon>Actinomycetota</taxon>
        <taxon>Actinomycetes</taxon>
        <taxon>Mycobacteriales</taxon>
        <taxon>Mycobacteriaceae</taxon>
        <taxon>Mycobacterium</taxon>
        <taxon>Mycobacterium ulcerans group</taxon>
    </lineage>
</organism>